<feature type="chain" id="PRO_0000377776" description="Uncharacterized protein 071L">
    <location>
        <begin position="1"/>
        <end position="221"/>
    </location>
</feature>
<feature type="region of interest" description="Disordered" evidence="1">
    <location>
        <begin position="1"/>
        <end position="22"/>
    </location>
</feature>
<feature type="compositionally biased region" description="Polar residues" evidence="1">
    <location>
        <begin position="7"/>
        <end position="16"/>
    </location>
</feature>
<evidence type="ECO:0000256" key="1">
    <source>
        <dbReference type="SAM" id="MobiDB-lite"/>
    </source>
</evidence>
<evidence type="ECO:0000305" key="2"/>
<comment type="similarity">
    <text evidence="2">Belongs to the IIV-6 259R family.</text>
</comment>
<organism>
    <name type="scientific">Invertebrate iridescent virus 3</name>
    <name type="common">IIV-3</name>
    <name type="synonym">Mosquito iridescent virus</name>
    <dbReference type="NCBI Taxonomy" id="345201"/>
    <lineage>
        <taxon>Viruses</taxon>
        <taxon>Varidnaviria</taxon>
        <taxon>Bamfordvirae</taxon>
        <taxon>Nucleocytoviricota</taxon>
        <taxon>Megaviricetes</taxon>
        <taxon>Pimascovirales</taxon>
        <taxon>Iridoviridae</taxon>
        <taxon>Betairidovirinae</taxon>
        <taxon>Chloriridovirus</taxon>
    </lineage>
</organism>
<name>VF259_IIV3</name>
<protein>
    <recommendedName>
        <fullName>Uncharacterized protein 071L</fullName>
    </recommendedName>
</protein>
<gene>
    <name type="ORF">IIV3-071L</name>
</gene>
<dbReference type="EMBL" id="DQ643392">
    <property type="protein sequence ID" value="ABF82101.1"/>
    <property type="molecule type" value="Genomic_DNA"/>
</dbReference>
<dbReference type="RefSeq" id="YP_654643.1">
    <property type="nucleotide sequence ID" value="NC_008187.1"/>
</dbReference>
<dbReference type="SMR" id="Q196Y9"/>
<dbReference type="KEGG" id="vg:4156282"/>
<dbReference type="OrthoDB" id="13401at10239"/>
<dbReference type="Proteomes" id="UP000001358">
    <property type="component" value="Genome"/>
</dbReference>
<organismHost>
    <name type="scientific">Aedes vexans</name>
    <name type="common">Inland floodwater mosquito</name>
    <name type="synonym">Culex vexans</name>
    <dbReference type="NCBI Taxonomy" id="7163"/>
</organismHost>
<organismHost>
    <name type="scientific">Culex territans</name>
    <dbReference type="NCBI Taxonomy" id="42431"/>
</organismHost>
<organismHost>
    <name type="scientific">Culiseta annulata</name>
    <dbReference type="NCBI Taxonomy" id="332058"/>
</organismHost>
<organismHost>
    <name type="scientific">Ochlerotatus sollicitans</name>
    <name type="common">eastern saltmarsh mosquito</name>
    <dbReference type="NCBI Taxonomy" id="310513"/>
</organismHost>
<organismHost>
    <name type="scientific">Ochlerotatus taeniorhynchus</name>
    <name type="common">Black salt marsh mosquito</name>
    <name type="synonym">Aedes taeniorhynchus</name>
    <dbReference type="NCBI Taxonomy" id="329105"/>
</organismHost>
<organismHost>
    <name type="scientific">Psorophora ferox</name>
    <dbReference type="NCBI Taxonomy" id="7183"/>
</organismHost>
<keyword id="KW-1185">Reference proteome</keyword>
<sequence length="221" mass="24141">MGLDNFTAPSTGTTPAGSPFLRMDQSSAGKYPDLPPSISDTTNFRIKKIMDDAKMLEEEIKFRKSIYKKYGRFSSVTDGIEYTLIMADIVLGTVATAIPGVGSLVSAATFSGVGLISGVAKMIQAKLMAKKMKNYRLAIVATTTLANLNRKISKAISDGQITHEEFEDIQNTVVEWKNGLQVVGKQPTLSRETIELLSQQATEKAQKDLLDQLKNMNLGKM</sequence>
<accession>Q196Y9</accession>
<proteinExistence type="inferred from homology"/>
<reference key="1">
    <citation type="journal article" date="2006" name="J. Virol.">
        <title>Genome of invertebrate iridescent virus type 3 (mosquito iridescent virus).</title>
        <authorList>
            <person name="Delhon G."/>
            <person name="Tulman E.R."/>
            <person name="Afonso C.L."/>
            <person name="Lu Z."/>
            <person name="Becnel J.J."/>
            <person name="Moser B.A."/>
            <person name="Kutish G.F."/>
            <person name="Rock D.L."/>
        </authorList>
    </citation>
    <scope>NUCLEOTIDE SEQUENCE [LARGE SCALE GENOMIC DNA]</scope>
</reference>